<name>OADG_VIBVU</name>
<feature type="chain" id="PRO_0000216464" description="Probable oxaloacetate decarboxylase gamma chain">
    <location>
        <begin position="1"/>
        <end position="85"/>
    </location>
</feature>
<feature type="transmembrane region" description="Helical" evidence="1">
    <location>
        <begin position="11"/>
        <end position="33"/>
    </location>
</feature>
<protein>
    <recommendedName>
        <fullName evidence="1">Probable oxaloacetate decarboxylase gamma chain</fullName>
        <ecNumber evidence="1">7.2.4.2</ecNumber>
    </recommendedName>
</protein>
<comment type="function">
    <text evidence="1">Catalyzes the decarboxylation of oxaloacetate coupled to Na(+) translocation.</text>
</comment>
<comment type="catalytic activity">
    <reaction evidence="1">
        <text>oxaloacetate + 2 Na(+)(in) + H(+) = pyruvate + 2 Na(+)(out) + CO2</text>
        <dbReference type="Rhea" id="RHEA:57724"/>
        <dbReference type="ChEBI" id="CHEBI:15361"/>
        <dbReference type="ChEBI" id="CHEBI:15378"/>
        <dbReference type="ChEBI" id="CHEBI:16452"/>
        <dbReference type="ChEBI" id="CHEBI:16526"/>
        <dbReference type="ChEBI" id="CHEBI:29101"/>
        <dbReference type="EC" id="7.2.4.2"/>
    </reaction>
</comment>
<comment type="cofactor">
    <cofactor evidence="1">
        <name>Na(+)</name>
        <dbReference type="ChEBI" id="CHEBI:29101"/>
    </cofactor>
</comment>
<comment type="subunit">
    <text evidence="1">Heterotrimer of an alpha, a beta and a gamma subunit.</text>
</comment>
<comment type="subcellular location">
    <subcellularLocation>
        <location evidence="1">Cell membrane</location>
        <topology evidence="1">Single-pass membrane protein</topology>
    </subcellularLocation>
</comment>
<comment type="similarity">
    <text evidence="1">Belongs to the OadG family.</text>
</comment>
<sequence>MTNIGSLLVDAAALMVTGMGVVFIFLTILIFLVRLMSKLVPQEVPPPITAPKAVKNQANHTSTVSPQVVAAISAAIHQHRASVAK</sequence>
<dbReference type="EC" id="7.2.4.2" evidence="1"/>
<dbReference type="EMBL" id="AE016795">
    <property type="protein sequence ID" value="AAO10021.2"/>
    <property type="molecule type" value="Genomic_DNA"/>
</dbReference>
<dbReference type="RefSeq" id="WP_011079529.1">
    <property type="nucleotide sequence ID" value="NC_004459.3"/>
</dbReference>
<dbReference type="SMR" id="Q8DC44"/>
<dbReference type="KEGG" id="vvu:VV1_1600"/>
<dbReference type="HOGENOM" id="CLU_168750_2_1_6"/>
<dbReference type="Proteomes" id="UP000002275">
    <property type="component" value="Chromosome 1"/>
</dbReference>
<dbReference type="GO" id="GO:0005886">
    <property type="term" value="C:plasma membrane"/>
    <property type="evidence" value="ECO:0007669"/>
    <property type="project" value="UniProtKB-SubCell"/>
</dbReference>
<dbReference type="GO" id="GO:0015451">
    <property type="term" value="F:decarboxylation-driven active transmembrane transporter activity"/>
    <property type="evidence" value="ECO:0007669"/>
    <property type="project" value="UniProtKB-EC"/>
</dbReference>
<dbReference type="GO" id="GO:0008948">
    <property type="term" value="F:oxaloacetate decarboxylase activity"/>
    <property type="evidence" value="ECO:0007669"/>
    <property type="project" value="UniProtKB-UniRule"/>
</dbReference>
<dbReference type="GO" id="GO:0015081">
    <property type="term" value="F:sodium ion transmembrane transporter activity"/>
    <property type="evidence" value="ECO:0007669"/>
    <property type="project" value="UniProtKB-UniRule"/>
</dbReference>
<dbReference type="GO" id="GO:0036376">
    <property type="term" value="P:sodium ion export across plasma membrane"/>
    <property type="evidence" value="ECO:0007669"/>
    <property type="project" value="InterPro"/>
</dbReference>
<dbReference type="HAMAP" id="MF_00404">
    <property type="entry name" value="OadG"/>
    <property type="match status" value="1"/>
</dbReference>
<dbReference type="InterPro" id="IPR005899">
    <property type="entry name" value="Na_pump_deCOase"/>
</dbReference>
<dbReference type="InterPro" id="IPR023424">
    <property type="entry name" value="OadG"/>
</dbReference>
<dbReference type="NCBIfam" id="TIGR01195">
    <property type="entry name" value="oadG_fam"/>
    <property type="match status" value="1"/>
</dbReference>
<dbReference type="NCBIfam" id="NF003004">
    <property type="entry name" value="PRK03814.1"/>
    <property type="match status" value="1"/>
</dbReference>
<dbReference type="Pfam" id="PF04277">
    <property type="entry name" value="OAD_gamma"/>
    <property type="match status" value="1"/>
</dbReference>
<evidence type="ECO:0000255" key="1">
    <source>
        <dbReference type="HAMAP-Rule" id="MF_00404"/>
    </source>
</evidence>
<accession>Q8DC44</accession>
<proteinExistence type="inferred from homology"/>
<gene>
    <name evidence="1" type="primary">oadG</name>
    <name type="ordered locus">VV1_1600</name>
</gene>
<reference key="1">
    <citation type="submission" date="2002-12" db="EMBL/GenBank/DDBJ databases">
        <title>Complete genome sequence of Vibrio vulnificus CMCP6.</title>
        <authorList>
            <person name="Rhee J.H."/>
            <person name="Kim S.Y."/>
            <person name="Chung S.S."/>
            <person name="Kim J.J."/>
            <person name="Moon Y.H."/>
            <person name="Jeong H."/>
            <person name="Choy H.E."/>
        </authorList>
    </citation>
    <scope>NUCLEOTIDE SEQUENCE [LARGE SCALE GENOMIC DNA]</scope>
    <source>
        <strain>CMCP6</strain>
    </source>
</reference>
<organism>
    <name type="scientific">Vibrio vulnificus (strain CMCP6)</name>
    <dbReference type="NCBI Taxonomy" id="216895"/>
    <lineage>
        <taxon>Bacteria</taxon>
        <taxon>Pseudomonadati</taxon>
        <taxon>Pseudomonadota</taxon>
        <taxon>Gammaproteobacteria</taxon>
        <taxon>Vibrionales</taxon>
        <taxon>Vibrionaceae</taxon>
        <taxon>Vibrio</taxon>
    </lineage>
</organism>
<keyword id="KW-1003">Cell membrane</keyword>
<keyword id="KW-0406">Ion transport</keyword>
<keyword id="KW-0472">Membrane</keyword>
<keyword id="KW-0915">Sodium</keyword>
<keyword id="KW-0739">Sodium transport</keyword>
<keyword id="KW-1278">Translocase</keyword>
<keyword id="KW-0812">Transmembrane</keyword>
<keyword id="KW-1133">Transmembrane helix</keyword>
<keyword id="KW-0813">Transport</keyword>